<gene>
    <name type="primary">NPY</name>
</gene>
<feature type="peptide" id="PRO_0000044788" description="Neuropeptide Y" evidence="3">
    <location>
        <begin position="1"/>
        <end position="36"/>
    </location>
</feature>
<feature type="modified residue" description="Tyrosine amide" evidence="3">
    <location>
        <position position="36"/>
    </location>
</feature>
<proteinExistence type="evidence at protein level"/>
<reference key="1">
    <citation type="journal article" date="1988" name="Regul. Pept.">
        <title>Neuropeptide Y in guinea pig, rabbit, rat and man. Identical amino acid sequence and oxidation of methionine-17.</title>
        <authorList>
            <person name="O'Hare M.M.T."/>
            <person name="Tenmoku S."/>
            <person name="Aakerlund L."/>
            <person name="Hilsted L."/>
            <person name="Johnsen A."/>
            <person name="Schwartz T.W."/>
        </authorList>
    </citation>
    <scope>PROTEIN SEQUENCE</scope>
    <scope>AMIDATION AT TYR-36</scope>
</reference>
<evidence type="ECO:0000250" key="1"/>
<evidence type="ECO:0000250" key="2">
    <source>
        <dbReference type="UniProtKB" id="P07808"/>
    </source>
</evidence>
<evidence type="ECO:0000269" key="3">
    <source>
    </source>
</evidence>
<evidence type="ECO:0000305" key="4"/>
<comment type="function">
    <text evidence="1">NPY is implicated in the control of feeding and in secretion of gonadotrophin-release hormone.</text>
</comment>
<comment type="subcellular location">
    <subcellularLocation>
        <location>Secreted</location>
    </subcellularLocation>
    <subcellularLocation>
        <location evidence="2">Cytoplasmic vesicle</location>
        <location evidence="2">Secretory vesicle</location>
        <location evidence="2">Neuronal dense core vesicle</location>
    </subcellularLocation>
</comment>
<comment type="tissue specificity">
    <text>One of the most abundant peptides in the nervous system. Also found in some chromaffin cells of the adrenal medulla.</text>
</comment>
<comment type="similarity">
    <text evidence="4">Belongs to the NPY family.</text>
</comment>
<name>NPY_RABIT</name>
<sequence>YPSKPDNPGEDAPAEDMARYYSALRHYINLITRQRY</sequence>
<protein>
    <recommendedName>
        <fullName>Neuropeptide Y</fullName>
        <shortName>NPY</shortName>
    </recommendedName>
</protein>
<dbReference type="PIR" id="A30485">
    <property type="entry name" value="A30485"/>
</dbReference>
<dbReference type="SMR" id="P68006"/>
<dbReference type="STRING" id="9986.ENSOCUP00000009261"/>
<dbReference type="PaxDb" id="9986-ENSOCUP00000009261"/>
<dbReference type="eggNOG" id="ENOG502S2BU">
    <property type="taxonomic scope" value="Eukaryota"/>
</dbReference>
<dbReference type="InParanoid" id="P68006"/>
<dbReference type="Proteomes" id="UP000001811">
    <property type="component" value="Unplaced"/>
</dbReference>
<dbReference type="GO" id="GO:0005615">
    <property type="term" value="C:extracellular space"/>
    <property type="evidence" value="ECO:0007669"/>
    <property type="project" value="TreeGrafter"/>
</dbReference>
<dbReference type="GO" id="GO:0098992">
    <property type="term" value="C:neuronal dense core vesicle"/>
    <property type="evidence" value="ECO:0000250"/>
    <property type="project" value="UniProtKB"/>
</dbReference>
<dbReference type="GO" id="GO:0005184">
    <property type="term" value="F:neuropeptide hormone activity"/>
    <property type="evidence" value="ECO:0007669"/>
    <property type="project" value="TreeGrafter"/>
</dbReference>
<dbReference type="GO" id="GO:0031841">
    <property type="term" value="F:neuropeptide Y receptor binding"/>
    <property type="evidence" value="ECO:0007669"/>
    <property type="project" value="TreeGrafter"/>
</dbReference>
<dbReference type="GO" id="GO:0007631">
    <property type="term" value="P:feeding behavior"/>
    <property type="evidence" value="ECO:0007669"/>
    <property type="project" value="TreeGrafter"/>
</dbReference>
<dbReference type="GO" id="GO:0007218">
    <property type="term" value="P:neuropeptide signaling pathway"/>
    <property type="evidence" value="ECO:0007669"/>
    <property type="project" value="UniProtKB-KW"/>
</dbReference>
<dbReference type="CDD" id="cd00126">
    <property type="entry name" value="PAH"/>
    <property type="match status" value="1"/>
</dbReference>
<dbReference type="Gene3D" id="6.10.250.900">
    <property type="match status" value="1"/>
</dbReference>
<dbReference type="InterPro" id="IPR001955">
    <property type="entry name" value="Pancreatic_hormone-like"/>
</dbReference>
<dbReference type="InterPro" id="IPR020392">
    <property type="entry name" value="Pancreatic_hormone-like_CS"/>
</dbReference>
<dbReference type="PANTHER" id="PTHR10533">
    <property type="entry name" value="NEUROPEPTIDE Y/PANCREATIC HORMONE/PEPTIDE YY"/>
    <property type="match status" value="1"/>
</dbReference>
<dbReference type="PANTHER" id="PTHR10533:SF5">
    <property type="entry name" value="PRO-NEUROPEPTIDE Y"/>
    <property type="match status" value="1"/>
</dbReference>
<dbReference type="Pfam" id="PF00159">
    <property type="entry name" value="Hormone_3"/>
    <property type="match status" value="1"/>
</dbReference>
<dbReference type="PRINTS" id="PR00278">
    <property type="entry name" value="PANCHORMONE"/>
</dbReference>
<dbReference type="SMART" id="SM00309">
    <property type="entry name" value="PAH"/>
    <property type="match status" value="1"/>
</dbReference>
<dbReference type="PROSITE" id="PS00265">
    <property type="entry name" value="PANCREATIC_HORMONE_1"/>
    <property type="match status" value="1"/>
</dbReference>
<dbReference type="PROSITE" id="PS50276">
    <property type="entry name" value="PANCREATIC_HORMONE_2"/>
    <property type="match status" value="1"/>
</dbReference>
<organism>
    <name type="scientific">Oryctolagus cuniculus</name>
    <name type="common">Rabbit</name>
    <dbReference type="NCBI Taxonomy" id="9986"/>
    <lineage>
        <taxon>Eukaryota</taxon>
        <taxon>Metazoa</taxon>
        <taxon>Chordata</taxon>
        <taxon>Craniata</taxon>
        <taxon>Vertebrata</taxon>
        <taxon>Euteleostomi</taxon>
        <taxon>Mammalia</taxon>
        <taxon>Eutheria</taxon>
        <taxon>Euarchontoglires</taxon>
        <taxon>Glires</taxon>
        <taxon>Lagomorpha</taxon>
        <taxon>Leporidae</taxon>
        <taxon>Oryctolagus</taxon>
    </lineage>
</organism>
<accession>P68006</accession>
<accession>P09640</accession>
<keyword id="KW-0027">Amidation</keyword>
<keyword id="KW-0968">Cytoplasmic vesicle</keyword>
<keyword id="KW-0903">Direct protein sequencing</keyword>
<keyword id="KW-0527">Neuropeptide</keyword>
<keyword id="KW-1185">Reference proteome</keyword>
<keyword id="KW-0964">Secreted</keyword>